<accession>P0DQX6</accession>
<feature type="peptide" id="PRO_0000457820" description="Codesane" evidence="1">
    <location>
        <begin position="1"/>
        <end position="18"/>
    </location>
</feature>
<feature type="modified residue" description="Lysine amide" evidence="1">
    <location>
        <position position="18"/>
    </location>
</feature>
<feature type="mutagenesis site" description="In COD-3; loss of hemolytic activity, but without important change in antimicrobial activity." evidence="1">
    <original>H</original>
    <variation>K</variation>
    <location>
        <position position="12"/>
    </location>
</feature>
<name>COD_COLDA</name>
<reference key="1">
    <citation type="journal article" date="2014" name="J. Pept. Sci.">
        <title>Interaction of a novel antimicrobial peptide isolated from the venom of solitary bee Colletes daviesanus with phospholipid vesicles and Escherichia coli cells.</title>
        <authorList>
            <person name="Cujova S."/>
            <person name="Bednarova L."/>
            <person name="Slaninova J."/>
            <person name="Straka J."/>
            <person name="Cerovsky V."/>
        </authorList>
    </citation>
    <scope>PROTEIN SEQUENCE</scope>
    <scope>FUNCTION</scope>
    <scope>MASS SPECTROMETRY</scope>
    <scope>SUBCELLULAR LOCATION</scope>
    <scope>SYNTHESIS</scope>
    <scope>AMIDATION AT LYS-18</scope>
    <scope>MUTAGENESIS OF HIS-12</scope>
    <source>
        <tissue>Venom</tissue>
    </source>
</reference>
<reference key="2">
    <citation type="journal article" date="2022" name="Toxins">
        <title>The pharmacological potential of novel melittin variants from the honeybee and solitary bees against inflammation and cancer.</title>
        <authorList>
            <person name="Erkoc P."/>
            <person name="von Reumont B.M."/>
            <person name="Lueddecke T."/>
            <person name="Henke M."/>
            <person name="Ulshoefer T."/>
            <person name="Vilcinskas A."/>
            <person name="Fuerst R."/>
            <person name="Schiffmann S."/>
        </authorList>
    </citation>
    <scope>FUNCTION</scope>
</reference>
<proteinExistence type="evidence at protein level"/>
<evidence type="ECO:0000269" key="1">
    <source>
    </source>
</evidence>
<evidence type="ECO:0000269" key="2">
    <source>
    </source>
</evidence>
<evidence type="ECO:0000303" key="3">
    <source>
    </source>
</evidence>
<evidence type="ECO:0000303" key="4">
    <source>
    </source>
</evidence>
<evidence type="ECO:0000305" key="5"/>
<evidence type="ECO:0000305" key="6">
    <source>
    </source>
</evidence>
<comment type="function">
    <text evidence="1 2">Short linear cationic amphipathic alpha-helical antimicrobial peptide (AMP) with potent activity against Gram-positive bacteria, moderate to low activity against Gram-negative bacteria, and low activity against the yeast C.albicans (PubMed:25123582). Has been tested on M.luteus (MIC=1.7 uM), B.subtilis (MIC=2.5 uM), S.aureus (MIC=3.7 uM), E.coli (MIC=3.7 uM), P.aeruginosa (MIC=31.7 uM), and the yeast C.albicans (MIC=25 uM) (PubMed:25123582). Also has noticeable hemolytic activity (LC(50)=105 uM on human erythrocytes), indicating it cannot be considered for therapeutic applications (PubMed:25123582). Interacts more strongly with anionic membranes compared to the zwitterionic ones (PubMed:25123582). At low concentrations, permeabilizes the outer and inner membranes of E.coli bacteria but the latter at a substantially slower rate (PubMed:25123582). In the context of inflammation and cancer tests, is weakly cytotoxic to normal cells, induces calcium signaling but does not impact cAMP production (PubMed:36548715). In addition, prevents LPS-induced nitric oxid (NO) synthesis but does not affect the IP3 signaling and pro-inflammatory activation of endothelial cells (PubMed:36548715). Does not show significant antiproliferative activity on the breast cancer cell line MDA-MB-231 (PubMed:36548715).</text>
</comment>
<comment type="subcellular location">
    <subcellularLocation>
        <location evidence="1">Secreted</location>
    </subcellularLocation>
    <subcellularLocation>
        <location evidence="1">Target cell membrane</location>
    </subcellularLocation>
    <text evidence="6">Adopts an amphipathic alpha-helical structure in the presence of membrane models, and inserts into membranes.</text>
</comment>
<comment type="tissue specificity">
    <text evidence="6">Expressed by the venom gland.</text>
</comment>
<comment type="mass spectrometry">
    <text>Monoisotopic mass.</text>
</comment>
<comment type="miscellaneous">
    <text evidence="1">Several analogs have been synthesized to study the effect on cationicity, hydrophobicity, alpha-helicity, amphipathicity, antibacterial, antifungal and hemolytic activities.</text>
</comment>
<comment type="similarity">
    <text evidence="5">Belongs to the xylopin-like family.</text>
</comment>
<organism>
    <name type="scientific">Colletes daviesanus</name>
    <name type="common">Plasterer bee</name>
    <dbReference type="NCBI Taxonomy" id="420712"/>
    <lineage>
        <taxon>Eukaryota</taxon>
        <taxon>Metazoa</taxon>
        <taxon>Ecdysozoa</taxon>
        <taxon>Arthropoda</taxon>
        <taxon>Hexapoda</taxon>
        <taxon>Insecta</taxon>
        <taxon>Pterygota</taxon>
        <taxon>Neoptera</taxon>
        <taxon>Endopterygota</taxon>
        <taxon>Hymenoptera</taxon>
        <taxon>Apocrita</taxon>
        <taxon>Aculeata</taxon>
        <taxon>Apoidea</taxon>
        <taxon>Anthophila</taxon>
        <taxon>Colletidae</taxon>
        <taxon>Colletinae</taxon>
        <taxon>Colletes</taxon>
    </lineage>
</organism>
<dbReference type="GO" id="GO:0005576">
    <property type="term" value="C:extracellular region"/>
    <property type="evidence" value="ECO:0007669"/>
    <property type="project" value="UniProtKB-SubCell"/>
</dbReference>
<dbReference type="GO" id="GO:0016020">
    <property type="term" value="C:membrane"/>
    <property type="evidence" value="ECO:0007669"/>
    <property type="project" value="UniProtKB-KW"/>
</dbReference>
<dbReference type="GO" id="GO:0044218">
    <property type="term" value="C:other organism cell membrane"/>
    <property type="evidence" value="ECO:0007669"/>
    <property type="project" value="UniProtKB-KW"/>
</dbReference>
<dbReference type="GO" id="GO:0042742">
    <property type="term" value="P:defense response to bacterium"/>
    <property type="evidence" value="ECO:0007669"/>
    <property type="project" value="UniProtKB-KW"/>
</dbReference>
<dbReference type="GO" id="GO:0050832">
    <property type="term" value="P:defense response to fungus"/>
    <property type="evidence" value="ECO:0007669"/>
    <property type="project" value="UniProtKB-KW"/>
</dbReference>
<dbReference type="GO" id="GO:0045087">
    <property type="term" value="P:innate immune response"/>
    <property type="evidence" value="ECO:0007669"/>
    <property type="project" value="UniProtKB-KW"/>
</dbReference>
<dbReference type="GO" id="GO:0031640">
    <property type="term" value="P:killing of cells of another organism"/>
    <property type="evidence" value="ECO:0007669"/>
    <property type="project" value="UniProtKB-KW"/>
</dbReference>
<protein>
    <recommendedName>
        <fullName evidence="3">Codesane</fullName>
        <shortName evidence="3">COD</shortName>
    </recommendedName>
    <alternativeName>
        <fullName evidence="4">Codesan</fullName>
    </alternativeName>
</protein>
<keyword id="KW-0027">Amidation</keyword>
<keyword id="KW-0044">Antibiotic</keyword>
<keyword id="KW-0929">Antimicrobial</keyword>
<keyword id="KW-0903">Direct protein sequencing</keyword>
<keyword id="KW-0295">Fungicide</keyword>
<keyword id="KW-0391">Immunity</keyword>
<keyword id="KW-0399">Innate immunity</keyword>
<keyword id="KW-0472">Membrane</keyword>
<keyword id="KW-0964">Secreted</keyword>
<keyword id="KW-1052">Target cell membrane</keyword>
<keyword id="KW-1053">Target membrane</keyword>
<sequence>GMASLLAKVLPHVVKLIK</sequence>